<name>KAD_HELHP</name>
<evidence type="ECO:0000255" key="1">
    <source>
        <dbReference type="HAMAP-Rule" id="MF_00235"/>
    </source>
</evidence>
<sequence>MKKLFLIIGAPGSGKTTDAQIIARDNADSIVHYSTGDLLREEVASGSEYGKTIDSFISKGNLVPLDIVVGTIINAIANAPKDVIIIDGYPRSIEQMEALDEKLKAQNQVQLVSVIEVEVSESVARERVLGRARGADDNVEVFNNRMQVYLTPLKDIETFYSKQKVLHKINGERMIEEIVSEMESFIKGKM</sequence>
<feature type="chain" id="PRO_0000158777" description="Adenylate kinase">
    <location>
        <begin position="1"/>
        <end position="190"/>
    </location>
</feature>
<feature type="region of interest" description="NMP" evidence="1">
    <location>
        <begin position="34"/>
        <end position="63"/>
    </location>
</feature>
<feature type="region of interest" description="LID" evidence="1">
    <location>
        <begin position="130"/>
        <end position="136"/>
    </location>
</feature>
<feature type="binding site" evidence="1">
    <location>
        <begin position="12"/>
        <end position="17"/>
    </location>
    <ligand>
        <name>ATP</name>
        <dbReference type="ChEBI" id="CHEBI:30616"/>
    </ligand>
</feature>
<feature type="binding site" evidence="1">
    <location>
        <position position="35"/>
    </location>
    <ligand>
        <name>AMP</name>
        <dbReference type="ChEBI" id="CHEBI:456215"/>
    </ligand>
</feature>
<feature type="binding site" evidence="1">
    <location>
        <position position="40"/>
    </location>
    <ligand>
        <name>AMP</name>
        <dbReference type="ChEBI" id="CHEBI:456215"/>
    </ligand>
</feature>
<feature type="binding site" evidence="1">
    <location>
        <begin position="61"/>
        <end position="63"/>
    </location>
    <ligand>
        <name>AMP</name>
        <dbReference type="ChEBI" id="CHEBI:456215"/>
    </ligand>
</feature>
<feature type="binding site" evidence="1">
    <location>
        <begin position="88"/>
        <end position="91"/>
    </location>
    <ligand>
        <name>AMP</name>
        <dbReference type="ChEBI" id="CHEBI:456215"/>
    </ligand>
</feature>
<feature type="binding site" evidence="1">
    <location>
        <position position="95"/>
    </location>
    <ligand>
        <name>AMP</name>
        <dbReference type="ChEBI" id="CHEBI:456215"/>
    </ligand>
</feature>
<feature type="binding site" evidence="1">
    <location>
        <position position="131"/>
    </location>
    <ligand>
        <name>ATP</name>
        <dbReference type="ChEBI" id="CHEBI:30616"/>
    </ligand>
</feature>
<feature type="binding site" evidence="1">
    <location>
        <position position="133"/>
    </location>
    <ligand>
        <name>AMP</name>
        <dbReference type="ChEBI" id="CHEBI:456215"/>
    </ligand>
</feature>
<feature type="binding site" evidence="1">
    <location>
        <position position="145"/>
    </location>
    <ligand>
        <name>AMP</name>
        <dbReference type="ChEBI" id="CHEBI:456215"/>
    </ligand>
</feature>
<feature type="binding site" evidence="1">
    <location>
        <position position="173"/>
    </location>
    <ligand>
        <name>ATP</name>
        <dbReference type="ChEBI" id="CHEBI:30616"/>
    </ligand>
</feature>
<dbReference type="EC" id="2.7.4.3" evidence="1"/>
<dbReference type="EMBL" id="AE017125">
    <property type="protein sequence ID" value="AAP78368.1"/>
    <property type="molecule type" value="Genomic_DNA"/>
</dbReference>
<dbReference type="RefSeq" id="WP_011116610.1">
    <property type="nucleotide sequence ID" value="NC_004917.1"/>
</dbReference>
<dbReference type="SMR" id="Q7VFA6"/>
<dbReference type="STRING" id="235279.HH_1771"/>
<dbReference type="KEGG" id="hhe:HH_1771"/>
<dbReference type="eggNOG" id="COG0563">
    <property type="taxonomic scope" value="Bacteria"/>
</dbReference>
<dbReference type="HOGENOM" id="CLU_032354_4_1_7"/>
<dbReference type="OrthoDB" id="9805030at2"/>
<dbReference type="UniPathway" id="UPA00588">
    <property type="reaction ID" value="UER00649"/>
</dbReference>
<dbReference type="Proteomes" id="UP000002495">
    <property type="component" value="Chromosome"/>
</dbReference>
<dbReference type="GO" id="GO:0005737">
    <property type="term" value="C:cytoplasm"/>
    <property type="evidence" value="ECO:0007669"/>
    <property type="project" value="UniProtKB-SubCell"/>
</dbReference>
<dbReference type="GO" id="GO:0004017">
    <property type="term" value="F:adenylate kinase activity"/>
    <property type="evidence" value="ECO:0007669"/>
    <property type="project" value="UniProtKB-UniRule"/>
</dbReference>
<dbReference type="GO" id="GO:0005524">
    <property type="term" value="F:ATP binding"/>
    <property type="evidence" value="ECO:0007669"/>
    <property type="project" value="UniProtKB-UniRule"/>
</dbReference>
<dbReference type="GO" id="GO:0044209">
    <property type="term" value="P:AMP salvage"/>
    <property type="evidence" value="ECO:0007669"/>
    <property type="project" value="UniProtKB-UniRule"/>
</dbReference>
<dbReference type="CDD" id="cd01428">
    <property type="entry name" value="ADK"/>
    <property type="match status" value="1"/>
</dbReference>
<dbReference type="Gene3D" id="3.40.50.300">
    <property type="entry name" value="P-loop containing nucleotide triphosphate hydrolases"/>
    <property type="match status" value="1"/>
</dbReference>
<dbReference type="HAMAP" id="MF_00235">
    <property type="entry name" value="Adenylate_kinase_Adk"/>
    <property type="match status" value="1"/>
</dbReference>
<dbReference type="InterPro" id="IPR000850">
    <property type="entry name" value="Adenylat/UMP-CMP_kin"/>
</dbReference>
<dbReference type="InterPro" id="IPR033690">
    <property type="entry name" value="Adenylat_kinase_CS"/>
</dbReference>
<dbReference type="InterPro" id="IPR027417">
    <property type="entry name" value="P-loop_NTPase"/>
</dbReference>
<dbReference type="NCBIfam" id="NF001384">
    <property type="entry name" value="PRK00279.2-2"/>
    <property type="match status" value="1"/>
</dbReference>
<dbReference type="PANTHER" id="PTHR23359">
    <property type="entry name" value="NUCLEOTIDE KINASE"/>
    <property type="match status" value="1"/>
</dbReference>
<dbReference type="Pfam" id="PF00406">
    <property type="entry name" value="ADK"/>
    <property type="match status" value="1"/>
</dbReference>
<dbReference type="PRINTS" id="PR00094">
    <property type="entry name" value="ADENYLTKNASE"/>
</dbReference>
<dbReference type="SUPFAM" id="SSF52540">
    <property type="entry name" value="P-loop containing nucleoside triphosphate hydrolases"/>
    <property type="match status" value="1"/>
</dbReference>
<dbReference type="PROSITE" id="PS00113">
    <property type="entry name" value="ADENYLATE_KINASE"/>
    <property type="match status" value="1"/>
</dbReference>
<protein>
    <recommendedName>
        <fullName evidence="1">Adenylate kinase</fullName>
        <shortName evidence="1">AK</shortName>
        <ecNumber evidence="1">2.7.4.3</ecNumber>
    </recommendedName>
    <alternativeName>
        <fullName evidence="1">ATP-AMP transphosphorylase</fullName>
    </alternativeName>
    <alternativeName>
        <fullName evidence="1">ATP:AMP phosphotransferase</fullName>
    </alternativeName>
    <alternativeName>
        <fullName evidence="1">Adenylate monophosphate kinase</fullName>
    </alternativeName>
</protein>
<keyword id="KW-0067">ATP-binding</keyword>
<keyword id="KW-0963">Cytoplasm</keyword>
<keyword id="KW-0418">Kinase</keyword>
<keyword id="KW-0545">Nucleotide biosynthesis</keyword>
<keyword id="KW-0547">Nucleotide-binding</keyword>
<keyword id="KW-1185">Reference proteome</keyword>
<keyword id="KW-0808">Transferase</keyword>
<proteinExistence type="inferred from homology"/>
<gene>
    <name evidence="1" type="primary">adk</name>
    <name type="ordered locus">HH_1771</name>
</gene>
<accession>Q7VFA6</accession>
<organism>
    <name type="scientific">Helicobacter hepaticus (strain ATCC 51449 / 3B1)</name>
    <dbReference type="NCBI Taxonomy" id="235279"/>
    <lineage>
        <taxon>Bacteria</taxon>
        <taxon>Pseudomonadati</taxon>
        <taxon>Campylobacterota</taxon>
        <taxon>Epsilonproteobacteria</taxon>
        <taxon>Campylobacterales</taxon>
        <taxon>Helicobacteraceae</taxon>
        <taxon>Helicobacter</taxon>
    </lineage>
</organism>
<reference key="1">
    <citation type="journal article" date="2003" name="Proc. Natl. Acad. Sci. U.S.A.">
        <title>The complete genome sequence of the carcinogenic bacterium Helicobacter hepaticus.</title>
        <authorList>
            <person name="Suerbaum S."/>
            <person name="Josenhans C."/>
            <person name="Sterzenbach T."/>
            <person name="Drescher B."/>
            <person name="Brandt P."/>
            <person name="Bell M."/>
            <person name="Droege M."/>
            <person name="Fartmann B."/>
            <person name="Fischer H.-P."/>
            <person name="Ge Z."/>
            <person name="Hoerster A."/>
            <person name="Holland R."/>
            <person name="Klein K."/>
            <person name="Koenig J."/>
            <person name="Macko L."/>
            <person name="Mendz G.L."/>
            <person name="Nyakatura G."/>
            <person name="Schauer D.B."/>
            <person name="Shen Z."/>
            <person name="Weber J."/>
            <person name="Frosch M."/>
            <person name="Fox J.G."/>
        </authorList>
    </citation>
    <scope>NUCLEOTIDE SEQUENCE [LARGE SCALE GENOMIC DNA]</scope>
    <source>
        <strain>ATCC 51449 / 3B1</strain>
    </source>
</reference>
<comment type="function">
    <text evidence="1">Catalyzes the reversible transfer of the terminal phosphate group between ATP and AMP. Plays an important role in cellular energy homeostasis and in adenine nucleotide metabolism.</text>
</comment>
<comment type="catalytic activity">
    <reaction evidence="1">
        <text>AMP + ATP = 2 ADP</text>
        <dbReference type="Rhea" id="RHEA:12973"/>
        <dbReference type="ChEBI" id="CHEBI:30616"/>
        <dbReference type="ChEBI" id="CHEBI:456215"/>
        <dbReference type="ChEBI" id="CHEBI:456216"/>
        <dbReference type="EC" id="2.7.4.3"/>
    </reaction>
</comment>
<comment type="pathway">
    <text evidence="1">Purine metabolism; AMP biosynthesis via salvage pathway; AMP from ADP: step 1/1.</text>
</comment>
<comment type="subunit">
    <text evidence="1">Monomer.</text>
</comment>
<comment type="subcellular location">
    <subcellularLocation>
        <location evidence="1">Cytoplasm</location>
    </subcellularLocation>
</comment>
<comment type="domain">
    <text evidence="1">Consists of three domains, a large central CORE domain and two small peripheral domains, NMPbind and LID, which undergo movements during catalysis. The LID domain closes over the site of phosphoryl transfer upon ATP binding. Assembling and dissambling the active center during each catalytic cycle provides an effective means to prevent ATP hydrolysis.</text>
</comment>
<comment type="similarity">
    <text evidence="1">Belongs to the adenylate kinase family.</text>
</comment>